<keyword id="KW-0067">ATP-binding</keyword>
<keyword id="KW-0143">Chaperone</keyword>
<keyword id="KW-0547">Nucleotide-binding</keyword>
<keyword id="KW-0597">Phosphoprotein</keyword>
<keyword id="KW-1185">Reference proteome</keyword>
<keyword id="KW-0346">Stress response</keyword>
<gene>
    <name evidence="1" type="primary">dnaK</name>
    <name type="ordered locus">BLA_0899</name>
</gene>
<protein>
    <recommendedName>
        <fullName evidence="1">Chaperone protein DnaK</fullName>
    </recommendedName>
    <alternativeName>
        <fullName evidence="1">HSP70</fullName>
    </alternativeName>
    <alternativeName>
        <fullName evidence="1">Heat shock 70 kDa protein</fullName>
    </alternativeName>
    <alternativeName>
        <fullName evidence="1">Heat shock protein 70</fullName>
    </alternativeName>
</protein>
<evidence type="ECO:0000255" key="1">
    <source>
        <dbReference type="HAMAP-Rule" id="MF_00332"/>
    </source>
</evidence>
<evidence type="ECO:0000256" key="2">
    <source>
        <dbReference type="SAM" id="MobiDB-lite"/>
    </source>
</evidence>
<proteinExistence type="inferred from homology"/>
<accession>B8DT62</accession>
<reference key="1">
    <citation type="journal article" date="2009" name="J. Bacteriol.">
        <title>Genome sequence of the probiotic bacterium Bifidobacterium animalis subsp. lactis AD011.</title>
        <authorList>
            <person name="Kim J.F."/>
            <person name="Jeong H."/>
            <person name="Yu D.S."/>
            <person name="Choi S.-H."/>
            <person name="Hur C.-G."/>
            <person name="Park M.-S."/>
            <person name="Yoon S.H."/>
            <person name="Kim D.-W."/>
            <person name="Ji G.E."/>
            <person name="Park H.-S."/>
            <person name="Oh T.K."/>
        </authorList>
    </citation>
    <scope>NUCLEOTIDE SEQUENCE [LARGE SCALE GENOMIC DNA]</scope>
    <source>
        <strain>AD011</strain>
    </source>
</reference>
<sequence>MGRAVGIDLGTTNSCIATLEGGEPTVIVNAEGARTTPSVVAFSKSGEILVGEVAKRQAVTNVDRTISSVKRHMGTDWTVDIDGKEWTPQEISAQILMKLKRDAEAYLGEPVTDAVITCPAYFNDAQRQATKDAGTIAGLNVLRIINEPTAAALAYGLEKSKEDERILVFDLGGGTFDVSLLEIGKDDDGFSTIQVQATSGDNHLGGDDWDQRIIDWLVGEVKNKYGVDLSKDKIALQRLKEAAEQAKKELSSSMSTTINMQYLAMTPDGTPVHLDETLTRAHFEEMTKDLLDRCRTPFNNVLADAGISVSQIDHVILVGGSTRMPAVKELVKELDGGKEANQSVNPDEVVAIGAAVQSGVIKGDRKDVLLIDVTPLSLGIETKGGIMTKLIERNTAIPAKRSEIFSTAEDNQPSVLIQVYQGEREFARDNKPLGTFELTGIAPAPRGVPQIEVTFDIDANGIVHVSAKDKGTGKEQSMTITGGSALPKEEIDQMIKDAEAHEADDKKRKEDAETRNNAENFAYQTEKLVNDNKDKLSDDVAKSVTDAINELKDALKGDDIEKIKAAQEKLMTEAQKIGQALYAQQGAEGAAGAADSGSANNGGDDDVVDAEVVDDDDKDNK</sequence>
<comment type="function">
    <text evidence="1">Acts as a chaperone.</text>
</comment>
<comment type="induction">
    <text evidence="1">By stress conditions e.g. heat shock.</text>
</comment>
<comment type="similarity">
    <text evidence="1">Belongs to the heat shock protein 70 family.</text>
</comment>
<dbReference type="EMBL" id="CP001213">
    <property type="protein sequence ID" value="ACL29191.1"/>
    <property type="molecule type" value="Genomic_DNA"/>
</dbReference>
<dbReference type="RefSeq" id="WP_004219269.1">
    <property type="nucleotide sequence ID" value="NC_011835.1"/>
</dbReference>
<dbReference type="SMR" id="B8DT62"/>
<dbReference type="STRING" id="442563.BLA_0899"/>
<dbReference type="GeneID" id="29695926"/>
<dbReference type="KEGG" id="bla:BLA_0899"/>
<dbReference type="HOGENOM" id="CLU_005965_2_1_11"/>
<dbReference type="Proteomes" id="UP000002456">
    <property type="component" value="Chromosome"/>
</dbReference>
<dbReference type="GO" id="GO:0005524">
    <property type="term" value="F:ATP binding"/>
    <property type="evidence" value="ECO:0007669"/>
    <property type="project" value="UniProtKB-UniRule"/>
</dbReference>
<dbReference type="GO" id="GO:0140662">
    <property type="term" value="F:ATP-dependent protein folding chaperone"/>
    <property type="evidence" value="ECO:0007669"/>
    <property type="project" value="InterPro"/>
</dbReference>
<dbReference type="GO" id="GO:0051082">
    <property type="term" value="F:unfolded protein binding"/>
    <property type="evidence" value="ECO:0007669"/>
    <property type="project" value="InterPro"/>
</dbReference>
<dbReference type="CDD" id="cd10234">
    <property type="entry name" value="ASKHA_NBD_HSP70_DnaK-like"/>
    <property type="match status" value="1"/>
</dbReference>
<dbReference type="FunFam" id="2.60.34.10:FF:000014">
    <property type="entry name" value="Chaperone protein DnaK HSP70"/>
    <property type="match status" value="1"/>
</dbReference>
<dbReference type="FunFam" id="1.20.1270.10:FF:000001">
    <property type="entry name" value="Molecular chaperone DnaK"/>
    <property type="match status" value="1"/>
</dbReference>
<dbReference type="FunFam" id="3.30.420.40:FF:000071">
    <property type="entry name" value="Molecular chaperone DnaK"/>
    <property type="match status" value="1"/>
</dbReference>
<dbReference type="FunFam" id="3.90.640.10:FF:000003">
    <property type="entry name" value="Molecular chaperone DnaK"/>
    <property type="match status" value="1"/>
</dbReference>
<dbReference type="Gene3D" id="1.20.1270.10">
    <property type="match status" value="1"/>
</dbReference>
<dbReference type="Gene3D" id="3.30.420.40">
    <property type="match status" value="2"/>
</dbReference>
<dbReference type="Gene3D" id="3.90.640.10">
    <property type="entry name" value="Actin, Chain A, domain 4"/>
    <property type="match status" value="1"/>
</dbReference>
<dbReference type="Gene3D" id="2.60.34.10">
    <property type="entry name" value="Substrate Binding Domain Of DNAk, Chain A, domain 1"/>
    <property type="match status" value="1"/>
</dbReference>
<dbReference type="HAMAP" id="MF_00332">
    <property type="entry name" value="DnaK"/>
    <property type="match status" value="1"/>
</dbReference>
<dbReference type="InterPro" id="IPR043129">
    <property type="entry name" value="ATPase_NBD"/>
</dbReference>
<dbReference type="InterPro" id="IPR012725">
    <property type="entry name" value="Chaperone_DnaK"/>
</dbReference>
<dbReference type="InterPro" id="IPR018181">
    <property type="entry name" value="Heat_shock_70_CS"/>
</dbReference>
<dbReference type="InterPro" id="IPR029048">
    <property type="entry name" value="HSP70_C_sf"/>
</dbReference>
<dbReference type="InterPro" id="IPR029047">
    <property type="entry name" value="HSP70_peptide-bd_sf"/>
</dbReference>
<dbReference type="InterPro" id="IPR013126">
    <property type="entry name" value="Hsp_70_fam"/>
</dbReference>
<dbReference type="NCBIfam" id="NF001413">
    <property type="entry name" value="PRK00290.1"/>
    <property type="match status" value="1"/>
</dbReference>
<dbReference type="NCBIfam" id="TIGR02350">
    <property type="entry name" value="prok_dnaK"/>
    <property type="match status" value="1"/>
</dbReference>
<dbReference type="PANTHER" id="PTHR19375">
    <property type="entry name" value="HEAT SHOCK PROTEIN 70KDA"/>
    <property type="match status" value="1"/>
</dbReference>
<dbReference type="Pfam" id="PF00012">
    <property type="entry name" value="HSP70"/>
    <property type="match status" value="2"/>
</dbReference>
<dbReference type="PRINTS" id="PR00301">
    <property type="entry name" value="HEATSHOCK70"/>
</dbReference>
<dbReference type="SUPFAM" id="SSF53067">
    <property type="entry name" value="Actin-like ATPase domain"/>
    <property type="match status" value="2"/>
</dbReference>
<dbReference type="SUPFAM" id="SSF100934">
    <property type="entry name" value="Heat shock protein 70kD (HSP70), C-terminal subdomain"/>
    <property type="match status" value="1"/>
</dbReference>
<dbReference type="SUPFAM" id="SSF100920">
    <property type="entry name" value="Heat shock protein 70kD (HSP70), peptide-binding domain"/>
    <property type="match status" value="1"/>
</dbReference>
<dbReference type="PROSITE" id="PS00297">
    <property type="entry name" value="HSP70_1"/>
    <property type="match status" value="1"/>
</dbReference>
<dbReference type="PROSITE" id="PS00329">
    <property type="entry name" value="HSP70_2"/>
    <property type="match status" value="1"/>
</dbReference>
<dbReference type="PROSITE" id="PS01036">
    <property type="entry name" value="HSP70_3"/>
    <property type="match status" value="1"/>
</dbReference>
<organism>
    <name type="scientific">Bifidobacterium animalis subsp. lactis (strain AD011)</name>
    <dbReference type="NCBI Taxonomy" id="442563"/>
    <lineage>
        <taxon>Bacteria</taxon>
        <taxon>Bacillati</taxon>
        <taxon>Actinomycetota</taxon>
        <taxon>Actinomycetes</taxon>
        <taxon>Bifidobacteriales</taxon>
        <taxon>Bifidobacteriaceae</taxon>
        <taxon>Bifidobacterium</taxon>
    </lineage>
</organism>
<name>DNAK_BIFA0</name>
<feature type="chain" id="PRO_1000133132" description="Chaperone protein DnaK">
    <location>
        <begin position="1"/>
        <end position="621"/>
    </location>
</feature>
<feature type="region of interest" description="Disordered" evidence="2">
    <location>
        <begin position="499"/>
        <end position="520"/>
    </location>
</feature>
<feature type="region of interest" description="Disordered" evidence="2">
    <location>
        <begin position="583"/>
        <end position="621"/>
    </location>
</feature>
<feature type="compositionally biased region" description="Basic and acidic residues" evidence="2">
    <location>
        <begin position="499"/>
        <end position="516"/>
    </location>
</feature>
<feature type="compositionally biased region" description="Low complexity" evidence="2">
    <location>
        <begin position="583"/>
        <end position="602"/>
    </location>
</feature>
<feature type="compositionally biased region" description="Acidic residues" evidence="2">
    <location>
        <begin position="603"/>
        <end position="621"/>
    </location>
</feature>
<feature type="modified residue" description="Phosphothreonine; by autocatalysis" evidence="1">
    <location>
        <position position="175"/>
    </location>
</feature>